<sequence length="73" mass="8736">RIFDTSCKGFYDRGLFAQLDRVCEDCYNLYRKPHVAAECRRDCYTTEVFESCLKDLMMHDFINEYKEMALMVS</sequence>
<dbReference type="PIR" id="S29776">
    <property type="entry name" value="S29776"/>
</dbReference>
<dbReference type="SMR" id="P30814"/>
<dbReference type="GO" id="GO:0005576">
    <property type="term" value="C:extracellular region"/>
    <property type="evidence" value="ECO:0007669"/>
    <property type="project" value="UniProtKB-SubCell"/>
</dbReference>
<dbReference type="GO" id="GO:0005184">
    <property type="term" value="F:neuropeptide hormone activity"/>
    <property type="evidence" value="ECO:0007669"/>
    <property type="project" value="InterPro"/>
</dbReference>
<dbReference type="GO" id="GO:0007623">
    <property type="term" value="P:circadian rhythm"/>
    <property type="evidence" value="ECO:0007669"/>
    <property type="project" value="TreeGrafter"/>
</dbReference>
<dbReference type="GO" id="GO:0006006">
    <property type="term" value="P:glucose metabolic process"/>
    <property type="evidence" value="ECO:0007669"/>
    <property type="project" value="UniProtKB-KW"/>
</dbReference>
<dbReference type="GO" id="GO:0007218">
    <property type="term" value="P:neuropeptide signaling pathway"/>
    <property type="evidence" value="ECO:0007669"/>
    <property type="project" value="UniProtKB-KW"/>
</dbReference>
<dbReference type="Gene3D" id="1.10.2010.10">
    <property type="entry name" value="Crustacean CHH/MIH/GIH neurohormone"/>
    <property type="match status" value="1"/>
</dbReference>
<dbReference type="InterPro" id="IPR018251">
    <property type="entry name" value="Crust_neurhormone_CS"/>
</dbReference>
<dbReference type="InterPro" id="IPR031098">
    <property type="entry name" value="Crust_neurohorm"/>
</dbReference>
<dbReference type="InterPro" id="IPR035957">
    <property type="entry name" value="Crust_neurohorm_sf"/>
</dbReference>
<dbReference type="InterPro" id="IPR001166">
    <property type="entry name" value="Hyperglycemic"/>
</dbReference>
<dbReference type="InterPro" id="IPR000346">
    <property type="entry name" value="Hyperglycemic1"/>
</dbReference>
<dbReference type="PANTHER" id="PTHR35981">
    <property type="entry name" value="ION TRANSPORT PEPTIDE, ISOFORM C"/>
    <property type="match status" value="1"/>
</dbReference>
<dbReference type="PANTHER" id="PTHR35981:SF2">
    <property type="entry name" value="ION TRANSPORT PEPTIDE, ISOFORM C"/>
    <property type="match status" value="1"/>
</dbReference>
<dbReference type="Pfam" id="PF01147">
    <property type="entry name" value="Crust_neurohorm"/>
    <property type="match status" value="1"/>
</dbReference>
<dbReference type="PRINTS" id="PR00548">
    <property type="entry name" value="HYPRGLYCEMC1"/>
</dbReference>
<dbReference type="PRINTS" id="PR00550">
    <property type="entry name" value="HYPRGLYCEMIC"/>
</dbReference>
<dbReference type="SUPFAM" id="SSF81778">
    <property type="entry name" value="Crustacean CHH/MIH/GIH neurohormone"/>
    <property type="match status" value="1"/>
</dbReference>
<dbReference type="PROSITE" id="PS01250">
    <property type="entry name" value="CHH_MIH_GIH"/>
    <property type="match status" value="1"/>
</dbReference>
<protein>
    <recommendedName>
        <fullName>Crustacean hyperglycemic hormone</fullName>
        <shortName>CHH</shortName>
    </recommendedName>
</protein>
<accession>P30814</accession>
<comment type="function">
    <text>Hormone found in the sinus gland of isopods and decapods which controls the blood sugar level. Has a secretagogue action over the amylase released from the midgut gland. May act as a stress hormone and may be involved in the control of molting and reproduction.</text>
</comment>
<comment type="subcellular location">
    <subcellularLocation>
        <location>Secreted</location>
    </subcellularLocation>
</comment>
<comment type="tissue specificity">
    <text evidence="1">Produced by the medulla terminalis X-organ in the eyestalks and transported to the sinus gland where they are stored and released. Found also in the brain; in the neuroendocrine structures of the protocerebrum.</text>
</comment>
<comment type="mass spectrometry" mass="8730.2" error="2.0" method="Electrospray" evidence="2"/>
<comment type="similarity">
    <text evidence="3">Belongs to the arthropod CHH/MIH/GIH/VIH hormone family.</text>
</comment>
<reference key="1">
    <citation type="journal article" date="1993" name="Eur. J. Biochem.">
        <title>Isolation and molecular characterization of a hyperglycemic neuropeptide from the sinus gland of the terrestrial isopod Armadillidium vulgare (Crustacea).</title>
        <authorList>
            <person name="Martin G."/>
            <person name="Sorokine O."/>
            <person name="van Dorsselaer A."/>
        </authorList>
    </citation>
    <scope>PROTEIN SEQUENCE</scope>
    <scope>MASS SPECTROMETRY</scope>
    <scope>DISULFIDE BONDS</scope>
    <scope>AMIDATION AT SER-73</scope>
    <source>
        <tissue>Sinus gland</tissue>
    </source>
</reference>
<reference key="2">
    <citation type="journal article" date="2003" name="Gen. Comp. Endocrinol.">
        <title>Localization of crustacean hyperglycemic and vitellogenesis-inhibiting hormones in separate cell types in the protocerebrum of the woodlouse Armadillidium vulgare (Crustacea, Isopoda).</title>
        <authorList>
            <person name="Azzouna A."/>
            <person name="Philippe M."/>
            <person name="Jarry T."/>
            <person name="Greve P."/>
            <person name="Martin G."/>
        </authorList>
    </citation>
    <scope>TISSUE SPECIFICITY</scope>
</reference>
<name>CHH_ARMVU</name>
<evidence type="ECO:0000269" key="1">
    <source>
    </source>
</evidence>
<evidence type="ECO:0000269" key="2">
    <source>
    </source>
</evidence>
<evidence type="ECO:0000305" key="3"/>
<keyword id="KW-0027">Amidation</keyword>
<keyword id="KW-0119">Carbohydrate metabolism</keyword>
<keyword id="KW-0903">Direct protein sequencing</keyword>
<keyword id="KW-1015">Disulfide bond</keyword>
<keyword id="KW-0313">Glucose metabolism</keyword>
<keyword id="KW-0372">Hormone</keyword>
<keyword id="KW-0527">Neuropeptide</keyword>
<keyword id="KW-0964">Secreted</keyword>
<feature type="chain" id="PRO_0000209852" description="Crustacean hyperglycemic hormone">
    <location>
        <begin position="1"/>
        <end position="73"/>
    </location>
</feature>
<feature type="modified residue" description="Serine amide" evidence="2">
    <location>
        <position position="73"/>
    </location>
</feature>
<feature type="disulfide bond" evidence="2">
    <location>
        <begin position="7"/>
        <end position="43"/>
    </location>
</feature>
<feature type="disulfide bond" evidence="2">
    <location>
        <begin position="23"/>
        <end position="39"/>
    </location>
</feature>
<feature type="disulfide bond" evidence="2">
    <location>
        <begin position="26"/>
        <end position="52"/>
    </location>
</feature>
<proteinExistence type="evidence at protein level"/>
<organism>
    <name type="scientific">Armadillidium vulgare</name>
    <name type="common">Pillbug</name>
    <name type="synonym">Pill woodlouse</name>
    <dbReference type="NCBI Taxonomy" id="13347"/>
    <lineage>
        <taxon>Eukaryota</taxon>
        <taxon>Metazoa</taxon>
        <taxon>Ecdysozoa</taxon>
        <taxon>Arthropoda</taxon>
        <taxon>Crustacea</taxon>
        <taxon>Multicrustacea</taxon>
        <taxon>Malacostraca</taxon>
        <taxon>Eumalacostraca</taxon>
        <taxon>Peracarida</taxon>
        <taxon>Isopoda</taxon>
        <taxon>Oniscidea</taxon>
        <taxon>Crinocheta</taxon>
        <taxon>Armadillidiidae</taxon>
        <taxon>Armadillidium</taxon>
    </lineage>
</organism>